<feature type="chain" id="PRO_1000149838" description="tRNA pseudouridine synthase D">
    <location>
        <begin position="1"/>
        <end position="348"/>
    </location>
</feature>
<feature type="domain" description="TRUD" evidence="1">
    <location>
        <begin position="150"/>
        <end position="304"/>
    </location>
</feature>
<feature type="active site" description="Nucleophile" evidence="1">
    <location>
        <position position="78"/>
    </location>
</feature>
<evidence type="ECO:0000255" key="1">
    <source>
        <dbReference type="HAMAP-Rule" id="MF_01082"/>
    </source>
</evidence>
<sequence length="348" mass="37162">MTDLPFVTADLPGSGGALRRAPEDFRVDEVPAYLPSGAGPHLYLRVEKRGRTSRDAVRELARALGVPERDAGCAGLKDKDAVTTQWLSFPVARDPDPAALAAPGLRVLEASRHQNKLRTGHVRANRFTLAVRGGDLGRARECAGALAARGLPNFFGPQRFGAAGRNAAVGRALVTGERTPEAGRAARDRFLRRLSLSAYQSLLFNRWLAERMADGLFAAALAGDAMKKLDTGGLFTCEDPAADGPRVERFEISPAGPMFGHALRLAAGEAGAREARLLEAEGIALADFARGGGEAEGTRRAARLRVEVALEPLEDGYRAAFELPRGAYATVVMRELTKGEAELPEDAD</sequence>
<keyword id="KW-0413">Isomerase</keyword>
<keyword id="KW-0819">tRNA processing</keyword>
<organism>
    <name type="scientific">Anaeromyxobacter dehalogenans (strain 2CP-1 / ATCC BAA-258)</name>
    <dbReference type="NCBI Taxonomy" id="455488"/>
    <lineage>
        <taxon>Bacteria</taxon>
        <taxon>Pseudomonadati</taxon>
        <taxon>Myxococcota</taxon>
        <taxon>Myxococcia</taxon>
        <taxon>Myxococcales</taxon>
        <taxon>Cystobacterineae</taxon>
        <taxon>Anaeromyxobacteraceae</taxon>
        <taxon>Anaeromyxobacter</taxon>
    </lineage>
</organism>
<protein>
    <recommendedName>
        <fullName evidence="1">tRNA pseudouridine synthase D</fullName>
        <ecNumber evidence="1">5.4.99.27</ecNumber>
    </recommendedName>
    <alternativeName>
        <fullName evidence="1">tRNA pseudouridine(13) synthase</fullName>
    </alternativeName>
    <alternativeName>
        <fullName evidence="1">tRNA pseudouridylate synthase D</fullName>
    </alternativeName>
    <alternativeName>
        <fullName evidence="1">tRNA-uridine isomerase D</fullName>
    </alternativeName>
</protein>
<name>TRUD_ANAD2</name>
<dbReference type="EC" id="5.4.99.27" evidence="1"/>
<dbReference type="EMBL" id="CP001359">
    <property type="protein sequence ID" value="ACL67108.1"/>
    <property type="molecule type" value="Genomic_DNA"/>
</dbReference>
<dbReference type="RefSeq" id="WP_015934863.1">
    <property type="nucleotide sequence ID" value="NC_011891.1"/>
</dbReference>
<dbReference type="SMR" id="B8J7C8"/>
<dbReference type="KEGG" id="acp:A2cp1_3784"/>
<dbReference type="HOGENOM" id="CLU_005281_4_0_7"/>
<dbReference type="Proteomes" id="UP000007089">
    <property type="component" value="Chromosome"/>
</dbReference>
<dbReference type="GO" id="GO:0005829">
    <property type="term" value="C:cytosol"/>
    <property type="evidence" value="ECO:0007669"/>
    <property type="project" value="TreeGrafter"/>
</dbReference>
<dbReference type="GO" id="GO:0003723">
    <property type="term" value="F:RNA binding"/>
    <property type="evidence" value="ECO:0007669"/>
    <property type="project" value="InterPro"/>
</dbReference>
<dbReference type="GO" id="GO:0160150">
    <property type="term" value="F:tRNA pseudouridine(13) synthase activity"/>
    <property type="evidence" value="ECO:0007669"/>
    <property type="project" value="UniProtKB-EC"/>
</dbReference>
<dbReference type="GO" id="GO:0031119">
    <property type="term" value="P:tRNA pseudouridine synthesis"/>
    <property type="evidence" value="ECO:0007669"/>
    <property type="project" value="UniProtKB-UniRule"/>
</dbReference>
<dbReference type="CDD" id="cd02575">
    <property type="entry name" value="PseudoU_synth_EcTruD"/>
    <property type="match status" value="1"/>
</dbReference>
<dbReference type="Gene3D" id="3.30.2350.20">
    <property type="entry name" value="TruD, catalytic domain"/>
    <property type="match status" value="1"/>
</dbReference>
<dbReference type="Gene3D" id="3.30.2340.10">
    <property type="entry name" value="TruD, insertion domain"/>
    <property type="match status" value="1"/>
</dbReference>
<dbReference type="HAMAP" id="MF_01082">
    <property type="entry name" value="TruD"/>
    <property type="match status" value="1"/>
</dbReference>
<dbReference type="InterPro" id="IPR020103">
    <property type="entry name" value="PsdUridine_synth_cat_dom_sf"/>
</dbReference>
<dbReference type="InterPro" id="IPR001656">
    <property type="entry name" value="PsdUridine_synth_TruD"/>
</dbReference>
<dbReference type="InterPro" id="IPR020119">
    <property type="entry name" value="PsdUridine_synth_TruD_CS"/>
</dbReference>
<dbReference type="InterPro" id="IPR011760">
    <property type="entry name" value="PsdUridine_synth_TruD_insert"/>
</dbReference>
<dbReference type="InterPro" id="IPR042214">
    <property type="entry name" value="TruD_catalytic"/>
</dbReference>
<dbReference type="InterPro" id="IPR043165">
    <property type="entry name" value="TruD_insert_sf"/>
</dbReference>
<dbReference type="InterPro" id="IPR050170">
    <property type="entry name" value="TruD_pseudoU_synthase"/>
</dbReference>
<dbReference type="PANTHER" id="PTHR47811">
    <property type="entry name" value="TRNA PSEUDOURIDINE SYNTHASE D"/>
    <property type="match status" value="1"/>
</dbReference>
<dbReference type="PANTHER" id="PTHR47811:SF1">
    <property type="entry name" value="TRNA PSEUDOURIDINE SYNTHASE D"/>
    <property type="match status" value="1"/>
</dbReference>
<dbReference type="Pfam" id="PF01142">
    <property type="entry name" value="TruD"/>
    <property type="match status" value="2"/>
</dbReference>
<dbReference type="SUPFAM" id="SSF55120">
    <property type="entry name" value="Pseudouridine synthase"/>
    <property type="match status" value="1"/>
</dbReference>
<dbReference type="PROSITE" id="PS50984">
    <property type="entry name" value="TRUD"/>
    <property type="match status" value="1"/>
</dbReference>
<dbReference type="PROSITE" id="PS01268">
    <property type="entry name" value="UPF0024"/>
    <property type="match status" value="1"/>
</dbReference>
<gene>
    <name evidence="1" type="primary">truD</name>
    <name type="ordered locus">A2cp1_3784</name>
</gene>
<reference key="1">
    <citation type="submission" date="2009-01" db="EMBL/GenBank/DDBJ databases">
        <title>Complete sequence of Anaeromyxobacter dehalogenans 2CP-1.</title>
        <authorList>
            <person name="Lucas S."/>
            <person name="Copeland A."/>
            <person name="Lapidus A."/>
            <person name="Glavina del Rio T."/>
            <person name="Dalin E."/>
            <person name="Tice H."/>
            <person name="Bruce D."/>
            <person name="Goodwin L."/>
            <person name="Pitluck S."/>
            <person name="Saunders E."/>
            <person name="Brettin T."/>
            <person name="Detter J.C."/>
            <person name="Han C."/>
            <person name="Larimer F."/>
            <person name="Land M."/>
            <person name="Hauser L."/>
            <person name="Kyrpides N."/>
            <person name="Ovchinnikova G."/>
            <person name="Beliaev A.S."/>
            <person name="Richardson P."/>
        </authorList>
    </citation>
    <scope>NUCLEOTIDE SEQUENCE [LARGE SCALE GENOMIC DNA]</scope>
    <source>
        <strain>2CP-1 / ATCC BAA-258</strain>
    </source>
</reference>
<proteinExistence type="inferred from homology"/>
<comment type="function">
    <text evidence="1">Responsible for synthesis of pseudouridine from uracil-13 in transfer RNAs.</text>
</comment>
<comment type="catalytic activity">
    <reaction evidence="1">
        <text>uridine(13) in tRNA = pseudouridine(13) in tRNA</text>
        <dbReference type="Rhea" id="RHEA:42540"/>
        <dbReference type="Rhea" id="RHEA-COMP:10105"/>
        <dbReference type="Rhea" id="RHEA-COMP:10106"/>
        <dbReference type="ChEBI" id="CHEBI:65314"/>
        <dbReference type="ChEBI" id="CHEBI:65315"/>
        <dbReference type="EC" id="5.4.99.27"/>
    </reaction>
</comment>
<comment type="similarity">
    <text evidence="1">Belongs to the pseudouridine synthase TruD family.</text>
</comment>
<accession>B8J7C8</accession>